<dbReference type="EC" id="5.99.-.-" evidence="1"/>
<dbReference type="EMBL" id="CP000454">
    <property type="protein sequence ID" value="ABK04389.1"/>
    <property type="molecule type" value="Genomic_DNA"/>
</dbReference>
<dbReference type="RefSeq" id="WP_011692841.1">
    <property type="nucleotide sequence ID" value="NC_008541.1"/>
</dbReference>
<dbReference type="SMR" id="A0JZB9"/>
<dbReference type="STRING" id="290399.Arth_3010"/>
<dbReference type="KEGG" id="art:Arth_3010"/>
<dbReference type="eggNOG" id="COG3485">
    <property type="taxonomic scope" value="Bacteria"/>
</dbReference>
<dbReference type="HOGENOM" id="CLU_085483_0_1_11"/>
<dbReference type="OrthoDB" id="4804006at2"/>
<dbReference type="Proteomes" id="UP000000754">
    <property type="component" value="Chromosome"/>
</dbReference>
<dbReference type="GO" id="GO:0020037">
    <property type="term" value="F:heme binding"/>
    <property type="evidence" value="ECO:0007669"/>
    <property type="project" value="UniProtKB-UniRule"/>
</dbReference>
<dbReference type="GO" id="GO:0046872">
    <property type="term" value="F:metal ion binding"/>
    <property type="evidence" value="ECO:0007669"/>
    <property type="project" value="UniProtKB-KW"/>
</dbReference>
<dbReference type="GO" id="GO:0062213">
    <property type="term" value="F:peroxynitrite isomerase activity"/>
    <property type="evidence" value="ECO:0007669"/>
    <property type="project" value="UniProtKB-UniRule"/>
</dbReference>
<dbReference type="CDD" id="cd07828">
    <property type="entry name" value="lipocalin_heme-bd-THAP4-like"/>
    <property type="match status" value="1"/>
</dbReference>
<dbReference type="Gene3D" id="2.40.128.20">
    <property type="match status" value="1"/>
</dbReference>
<dbReference type="HAMAP" id="MF_01297">
    <property type="entry name" value="nitrobindin"/>
    <property type="match status" value="1"/>
</dbReference>
<dbReference type="InterPro" id="IPR012674">
    <property type="entry name" value="Calycin"/>
</dbReference>
<dbReference type="InterPro" id="IPR022939">
    <property type="entry name" value="Nb(III)_bact/plant"/>
</dbReference>
<dbReference type="InterPro" id="IPR045165">
    <property type="entry name" value="Nitrobindin"/>
</dbReference>
<dbReference type="InterPro" id="IPR014878">
    <property type="entry name" value="THAP4-like_heme-bd"/>
</dbReference>
<dbReference type="PANTHER" id="PTHR15854:SF4">
    <property type="entry name" value="PEROXYNITRITE ISOMERASE THAP4"/>
    <property type="match status" value="1"/>
</dbReference>
<dbReference type="PANTHER" id="PTHR15854">
    <property type="entry name" value="THAP4 PROTEIN"/>
    <property type="match status" value="1"/>
</dbReference>
<dbReference type="Pfam" id="PF08768">
    <property type="entry name" value="THAP4_heme-bd"/>
    <property type="match status" value="1"/>
</dbReference>
<dbReference type="SUPFAM" id="SSF50814">
    <property type="entry name" value="Lipocalins"/>
    <property type="match status" value="1"/>
</dbReference>
<name>NB_ARTS2</name>
<organism>
    <name type="scientific">Arthrobacter sp. (strain FB24)</name>
    <dbReference type="NCBI Taxonomy" id="290399"/>
    <lineage>
        <taxon>Bacteria</taxon>
        <taxon>Bacillati</taxon>
        <taxon>Actinomycetota</taxon>
        <taxon>Actinomycetes</taxon>
        <taxon>Micrococcales</taxon>
        <taxon>Micrococcaceae</taxon>
        <taxon>Arthrobacter</taxon>
    </lineage>
</organism>
<accession>A0JZB9</accession>
<protein>
    <recommendedName>
        <fullName>Peroxynitrite isomerase</fullName>
        <ecNumber evidence="1">5.99.-.-</ecNumber>
    </recommendedName>
    <alternativeName>
        <fullName>Ferric nitrobindin</fullName>
        <shortName>Nb(III)</shortName>
    </alternativeName>
</protein>
<comment type="function">
    <text evidence="1">Heme-binding protein able to scavenge peroxynitrite and to protect free L-tyrosine against peroxynitrite-mediated nitration, by acting as a peroxynitrite isomerase that converts peroxynitrite to nitrate. Therefore, this protein likely plays a role in peroxynitrite sensing and in the detoxification of reactive nitrogen and oxygen species (RNS and ROS, respectively). Is able to bind nitric oxide (NO) in vitro, but may act as a sensor of peroxynitrite levels in vivo.</text>
</comment>
<comment type="catalytic activity">
    <reaction evidence="1">
        <text>peroxynitrite = nitrate</text>
        <dbReference type="Rhea" id="RHEA:63116"/>
        <dbReference type="ChEBI" id="CHEBI:17632"/>
        <dbReference type="ChEBI" id="CHEBI:25941"/>
    </reaction>
    <physiologicalReaction direction="left-to-right" evidence="1">
        <dbReference type="Rhea" id="RHEA:63117"/>
    </physiologicalReaction>
</comment>
<comment type="cofactor">
    <cofactor evidence="1">
        <name>heme b</name>
        <dbReference type="ChEBI" id="CHEBI:60344"/>
    </cofactor>
    <text evidence="1">Binds 1 heme b group per subunit, that coordinates a highly solvent-exposed Fe(III) atom.</text>
</comment>
<comment type="pathway">
    <text evidence="1">Nitrogen metabolism.</text>
</comment>
<comment type="subunit">
    <text evidence="1">Homodimer.</text>
</comment>
<comment type="domain">
    <text evidence="1">Forms a 10-stranded antiparallel beta-barrel structure able to accommodate a hydrophobic ligand in its interior. In fact, this fold hosts the heme group, which is located in a wide surface cleft.</text>
</comment>
<comment type="similarity">
    <text evidence="1">Belongs to the nitrobindin family.</text>
</comment>
<sequence length="204" mass="22190">MPIEIPTDLTPELVPLSWLIGEWEGSGRLGAGEEDSEHFSQHVSFTHNGLPYLQYRAESWLTDDEGTRLRPLTVETGFWALERKQREEDGGPGLIPADIVPVLKSADEVEALRNSDGGFDISVSISHPGGISELYYGQIKGPQIQLSTDMVMRGSHSKEYTAATRIFGLVDGKLLWRWDVATGAGSTQGGGLEAHASAILSKIS</sequence>
<keyword id="KW-0349">Heme</keyword>
<keyword id="KW-0408">Iron</keyword>
<keyword id="KW-0413">Isomerase</keyword>
<keyword id="KW-0479">Metal-binding</keyword>
<keyword id="KW-1185">Reference proteome</keyword>
<gene>
    <name type="ordered locus">Arth_3010</name>
</gene>
<reference key="1">
    <citation type="journal article" date="2013" name="Stand. Genomic Sci.">
        <title>Complete genome sequence of Arthrobacter sp. strain FB24.</title>
        <authorList>
            <person name="Nakatsu C.H."/>
            <person name="Barabote R."/>
            <person name="Thompson S."/>
            <person name="Bruce D."/>
            <person name="Detter C."/>
            <person name="Brettin T."/>
            <person name="Han C."/>
            <person name="Beasley F."/>
            <person name="Chen W."/>
            <person name="Konopka A."/>
            <person name="Xie G."/>
        </authorList>
    </citation>
    <scope>NUCLEOTIDE SEQUENCE [LARGE SCALE GENOMIC DNA]</scope>
    <source>
        <strain>FB24</strain>
    </source>
</reference>
<evidence type="ECO:0000255" key="1">
    <source>
        <dbReference type="HAMAP-Rule" id="MF_01297"/>
    </source>
</evidence>
<feature type="chain" id="PRO_0000356896" description="Peroxynitrite isomerase">
    <location>
        <begin position="1"/>
        <end position="204"/>
    </location>
</feature>
<feature type="short sequence motif" description="GXWXGXG" evidence="1">
    <location>
        <begin position="21"/>
        <end position="27"/>
    </location>
</feature>
<feature type="binding site" description="axial binding residue" evidence="1">
    <location>
        <position position="195"/>
    </location>
    <ligand>
        <name>heme b</name>
        <dbReference type="ChEBI" id="CHEBI:60344"/>
    </ligand>
    <ligandPart>
        <name>Fe</name>
        <dbReference type="ChEBI" id="CHEBI:18248"/>
    </ligandPart>
</feature>
<proteinExistence type="inferred from homology"/>